<feature type="transit peptide" description="Chloroplast" evidence="2">
    <location>
        <begin position="1"/>
        <end status="unknown"/>
    </location>
</feature>
<feature type="chain" id="PRO_0000006637" description="Adenylyl-sulfate kinase, chloroplastic">
    <location>
        <begin status="unknown"/>
        <end position="312"/>
    </location>
</feature>
<feature type="active site" description="Phosphoserine intermediate" evidence="1">
    <location>
        <position position="216"/>
    </location>
</feature>
<feature type="binding site" evidence="2">
    <location>
        <begin position="142"/>
        <end position="149"/>
    </location>
    <ligand>
        <name>ATP</name>
        <dbReference type="ChEBI" id="CHEBI:30616"/>
    </ligand>
</feature>
<organism>
    <name type="scientific">Catharanthus roseus</name>
    <name type="common">Madagascar periwinkle</name>
    <name type="synonym">Vinca rosea</name>
    <dbReference type="NCBI Taxonomy" id="4058"/>
    <lineage>
        <taxon>Eukaryota</taxon>
        <taxon>Viridiplantae</taxon>
        <taxon>Streptophyta</taxon>
        <taxon>Embryophyta</taxon>
        <taxon>Tracheophyta</taxon>
        <taxon>Spermatophyta</taxon>
        <taxon>Magnoliopsida</taxon>
        <taxon>eudicotyledons</taxon>
        <taxon>Gunneridae</taxon>
        <taxon>Pentapetalae</taxon>
        <taxon>asterids</taxon>
        <taxon>lamiids</taxon>
        <taxon>Gentianales</taxon>
        <taxon>Apocynaceae</taxon>
        <taxon>Rauvolfioideae</taxon>
        <taxon>Vinceae</taxon>
        <taxon>Catharanthinae</taxon>
        <taxon>Catharanthus</taxon>
    </lineage>
</organism>
<dbReference type="EC" id="2.7.1.25"/>
<dbReference type="EMBL" id="AF044285">
    <property type="protein sequence ID" value="AAC31145.1"/>
    <property type="molecule type" value="mRNA"/>
</dbReference>
<dbReference type="PIR" id="T08076">
    <property type="entry name" value="T08076"/>
</dbReference>
<dbReference type="SMR" id="O49204"/>
<dbReference type="UniPathway" id="UPA00140">
    <property type="reaction ID" value="UER00205"/>
</dbReference>
<dbReference type="GO" id="GO:0009507">
    <property type="term" value="C:chloroplast"/>
    <property type="evidence" value="ECO:0007669"/>
    <property type="project" value="UniProtKB-SubCell"/>
</dbReference>
<dbReference type="GO" id="GO:0004020">
    <property type="term" value="F:adenylylsulfate kinase activity"/>
    <property type="evidence" value="ECO:0007669"/>
    <property type="project" value="UniProtKB-EC"/>
</dbReference>
<dbReference type="GO" id="GO:0005524">
    <property type="term" value="F:ATP binding"/>
    <property type="evidence" value="ECO:0007669"/>
    <property type="project" value="UniProtKB-KW"/>
</dbReference>
<dbReference type="GO" id="GO:0019344">
    <property type="term" value="P:cysteine biosynthetic process"/>
    <property type="evidence" value="ECO:0007669"/>
    <property type="project" value="UniProtKB-KW"/>
</dbReference>
<dbReference type="GO" id="GO:0070814">
    <property type="term" value="P:hydrogen sulfide biosynthetic process"/>
    <property type="evidence" value="ECO:0007669"/>
    <property type="project" value="UniProtKB-UniPathway"/>
</dbReference>
<dbReference type="GO" id="GO:0000103">
    <property type="term" value="P:sulfate assimilation"/>
    <property type="evidence" value="ECO:0007669"/>
    <property type="project" value="InterPro"/>
</dbReference>
<dbReference type="CDD" id="cd02027">
    <property type="entry name" value="APSK"/>
    <property type="match status" value="1"/>
</dbReference>
<dbReference type="FunFam" id="3.40.50.300:FF:000629">
    <property type="entry name" value="Adenylyl-sulfate kinase"/>
    <property type="match status" value="1"/>
</dbReference>
<dbReference type="Gene3D" id="3.40.50.300">
    <property type="entry name" value="P-loop containing nucleotide triphosphate hydrolases"/>
    <property type="match status" value="1"/>
</dbReference>
<dbReference type="HAMAP" id="MF_00065">
    <property type="entry name" value="Adenylyl_sulf_kinase"/>
    <property type="match status" value="1"/>
</dbReference>
<dbReference type="InterPro" id="IPR002891">
    <property type="entry name" value="APS_kinase"/>
</dbReference>
<dbReference type="InterPro" id="IPR027417">
    <property type="entry name" value="P-loop_NTPase"/>
</dbReference>
<dbReference type="NCBIfam" id="TIGR00455">
    <property type="entry name" value="apsK"/>
    <property type="match status" value="1"/>
</dbReference>
<dbReference type="NCBIfam" id="NF003013">
    <property type="entry name" value="PRK03846.1"/>
    <property type="match status" value="1"/>
</dbReference>
<dbReference type="PANTHER" id="PTHR11055:SF63">
    <property type="entry name" value="ADENYLYL-SULFATE KINASE 1, CHLOROPLASTIC"/>
    <property type="match status" value="1"/>
</dbReference>
<dbReference type="PANTHER" id="PTHR11055">
    <property type="entry name" value="BIFUNCTIONAL 3'-PHOSPHOADENOSINE 5'-PHOSPHOSULFATE SYNTHASE"/>
    <property type="match status" value="1"/>
</dbReference>
<dbReference type="Pfam" id="PF01583">
    <property type="entry name" value="APS_kinase"/>
    <property type="match status" value="1"/>
</dbReference>
<dbReference type="SUPFAM" id="SSF52540">
    <property type="entry name" value="P-loop containing nucleoside triphosphate hydrolases"/>
    <property type="match status" value="1"/>
</dbReference>
<protein>
    <recommendedName>
        <fullName>Adenylyl-sulfate kinase, chloroplastic</fullName>
        <ecNumber>2.7.1.25</ecNumber>
    </recommendedName>
    <alternativeName>
        <fullName>ATP adenosine-5'-phosphosulfate 3'-phosphotransferase</fullName>
    </alternativeName>
    <alternativeName>
        <fullName>Adenosine-5'-phosphosulfate kinase</fullName>
        <shortName>APS kinase</shortName>
    </alternativeName>
</protein>
<reference key="1">
    <citation type="online journal article" date="1998" name="Plant Gene Register">
        <title>Isolation of cDNA clones encoding adenosine-5'-phosphosulfate-kinase (EC 2.7.1.25) from Catharanthus roseus and an isoform (akn2) from Arabidopsis.</title>
        <authorList>
            <person name="Schiffmann S."/>
            <person name="Schwenn J.-D."/>
        </authorList>
        <locator>PGR98-116</locator>
    </citation>
    <scope>NUCLEOTIDE SEQUENCE [MRNA]</scope>
</reference>
<name>KAPS_CATRO</name>
<proteinExistence type="evidence at transcript level"/>
<accession>O49204</accession>
<comment type="function">
    <text>Catalyzes the synthesis of activated sulfate.</text>
</comment>
<comment type="catalytic activity">
    <reaction>
        <text>adenosine 5'-phosphosulfate + ATP = 3'-phosphoadenylyl sulfate + ADP + H(+)</text>
        <dbReference type="Rhea" id="RHEA:24152"/>
        <dbReference type="ChEBI" id="CHEBI:15378"/>
        <dbReference type="ChEBI" id="CHEBI:30616"/>
        <dbReference type="ChEBI" id="CHEBI:58243"/>
        <dbReference type="ChEBI" id="CHEBI:58339"/>
        <dbReference type="ChEBI" id="CHEBI:456216"/>
        <dbReference type="EC" id="2.7.1.25"/>
    </reaction>
</comment>
<comment type="pathway">
    <text>Sulfur metabolism; hydrogen sulfide biosynthesis; sulfite from sulfate: step 2/3.</text>
</comment>
<comment type="subcellular location">
    <subcellularLocation>
        <location evidence="1">Plastid</location>
        <location evidence="1">Chloroplast</location>
    </subcellularLocation>
</comment>
<comment type="similarity">
    <text evidence="3">Belongs to the APS kinase family.</text>
</comment>
<evidence type="ECO:0000250" key="1"/>
<evidence type="ECO:0000255" key="2"/>
<evidence type="ECO:0000305" key="3"/>
<keyword id="KW-0028">Amino-acid biosynthesis</keyword>
<keyword id="KW-0067">ATP-binding</keyword>
<keyword id="KW-0150">Chloroplast</keyword>
<keyword id="KW-0198">Cysteine biosynthesis</keyword>
<keyword id="KW-0418">Kinase</keyword>
<keyword id="KW-0547">Nucleotide-binding</keyword>
<keyword id="KW-0597">Phosphoprotein</keyword>
<keyword id="KW-0934">Plastid</keyword>
<keyword id="KW-0808">Transferase</keyword>
<keyword id="KW-0809">Transit peptide</keyword>
<sequence length="312" mass="33657">MIGSVKRPVVSCVLPEFDFTESTGLGKKSSSVKLPVNFGAFGSGGGEVKLGFLAPIKATEGSKTSSFQVNGKVDNFRHLQPSDCNSNSDSSLNNCNGFPGKKILQTTTVGNSTNILWHKCAVEKSERQEPLQQRGCVIWITGLSGSGKSTLACALSRGLHAKGKLTYILDGDNVRHGLNSDLSFKAEDRAENIRRIGEVAKLFADAGVICIASLISPYRKPPDACRSLLPEGDFIEVFMDVPLKVCEARDPKGLYKLARAGKIKGFTGIDDPYEPPLKSEIVLHQKLGMCDSPCDLADIVISYLEENGYLKA</sequence>
<gene>
    <name type="primary">AKN</name>
</gene>